<gene>
    <name evidence="1" type="primary">hisF</name>
    <name type="ordered locus">ACIAD3404</name>
</gene>
<evidence type="ECO:0000255" key="1">
    <source>
        <dbReference type="HAMAP-Rule" id="MF_01013"/>
    </source>
</evidence>
<evidence type="ECO:0000305" key="2"/>
<protein>
    <recommendedName>
        <fullName evidence="1">Imidazole glycerol phosphate synthase subunit HisF</fullName>
        <ecNumber evidence="1">4.3.2.10</ecNumber>
    </recommendedName>
    <alternativeName>
        <fullName evidence="1">IGP synthase cyclase subunit</fullName>
    </alternativeName>
    <alternativeName>
        <fullName evidence="1">IGP synthase subunit HisF</fullName>
    </alternativeName>
    <alternativeName>
        <fullName evidence="1">ImGP synthase subunit HisF</fullName>
        <shortName evidence="1">IGPS subunit HisF</shortName>
    </alternativeName>
</protein>
<comment type="function">
    <text evidence="1">IGPS catalyzes the conversion of PRFAR and glutamine to IGP, AICAR and glutamate. The HisF subunit catalyzes the cyclization activity that produces IGP and AICAR from PRFAR using the ammonia provided by the HisH subunit.</text>
</comment>
<comment type="catalytic activity">
    <reaction evidence="1">
        <text>5-[(5-phospho-1-deoxy-D-ribulos-1-ylimino)methylamino]-1-(5-phospho-beta-D-ribosyl)imidazole-4-carboxamide + L-glutamine = D-erythro-1-(imidazol-4-yl)glycerol 3-phosphate + 5-amino-1-(5-phospho-beta-D-ribosyl)imidazole-4-carboxamide + L-glutamate + H(+)</text>
        <dbReference type="Rhea" id="RHEA:24793"/>
        <dbReference type="ChEBI" id="CHEBI:15378"/>
        <dbReference type="ChEBI" id="CHEBI:29985"/>
        <dbReference type="ChEBI" id="CHEBI:58278"/>
        <dbReference type="ChEBI" id="CHEBI:58359"/>
        <dbReference type="ChEBI" id="CHEBI:58475"/>
        <dbReference type="ChEBI" id="CHEBI:58525"/>
        <dbReference type="EC" id="4.3.2.10"/>
    </reaction>
</comment>
<comment type="pathway">
    <text evidence="1">Amino-acid biosynthesis; L-histidine biosynthesis; L-histidine from 5-phospho-alpha-D-ribose 1-diphosphate: step 5/9.</text>
</comment>
<comment type="subunit">
    <text evidence="1">Heterodimer of HisH and HisF.</text>
</comment>
<comment type="subcellular location">
    <subcellularLocation>
        <location evidence="1">Cytoplasm</location>
    </subcellularLocation>
</comment>
<comment type="similarity">
    <text evidence="1">Belongs to the HisA/HisF family.</text>
</comment>
<comment type="sequence caution" evidence="2">
    <conflict type="erroneous initiation">
        <sequence resource="EMBL-CDS" id="CAG70066"/>
    </conflict>
</comment>
<organism>
    <name type="scientific">Acinetobacter baylyi (strain ATCC 33305 / BD413 / ADP1)</name>
    <dbReference type="NCBI Taxonomy" id="62977"/>
    <lineage>
        <taxon>Bacteria</taxon>
        <taxon>Pseudomonadati</taxon>
        <taxon>Pseudomonadota</taxon>
        <taxon>Gammaproteobacteria</taxon>
        <taxon>Moraxellales</taxon>
        <taxon>Moraxellaceae</taxon>
        <taxon>Acinetobacter</taxon>
    </lineage>
</organism>
<dbReference type="EC" id="4.3.2.10" evidence="1"/>
<dbReference type="EMBL" id="CR543861">
    <property type="protein sequence ID" value="CAG70066.1"/>
    <property type="status" value="ALT_INIT"/>
    <property type="molecule type" value="Genomic_DNA"/>
</dbReference>
<dbReference type="RefSeq" id="WP_004923599.1">
    <property type="nucleotide sequence ID" value="NC_005966.1"/>
</dbReference>
<dbReference type="SMR" id="Q6F799"/>
<dbReference type="STRING" id="202950.GCA_001485005_02242"/>
<dbReference type="GeneID" id="45235598"/>
<dbReference type="KEGG" id="aci:ACIAD3404"/>
<dbReference type="eggNOG" id="COG0107">
    <property type="taxonomic scope" value="Bacteria"/>
</dbReference>
<dbReference type="HOGENOM" id="CLU_048577_4_0_6"/>
<dbReference type="OrthoDB" id="9781903at2"/>
<dbReference type="BioCyc" id="ASP62977:ACIAD_RS15415-MONOMER"/>
<dbReference type="UniPathway" id="UPA00031">
    <property type="reaction ID" value="UER00010"/>
</dbReference>
<dbReference type="Proteomes" id="UP000000430">
    <property type="component" value="Chromosome"/>
</dbReference>
<dbReference type="GO" id="GO:0005737">
    <property type="term" value="C:cytoplasm"/>
    <property type="evidence" value="ECO:0007669"/>
    <property type="project" value="UniProtKB-SubCell"/>
</dbReference>
<dbReference type="GO" id="GO:0000107">
    <property type="term" value="F:imidazoleglycerol-phosphate synthase activity"/>
    <property type="evidence" value="ECO:0007669"/>
    <property type="project" value="UniProtKB-UniRule"/>
</dbReference>
<dbReference type="GO" id="GO:0016829">
    <property type="term" value="F:lyase activity"/>
    <property type="evidence" value="ECO:0007669"/>
    <property type="project" value="UniProtKB-KW"/>
</dbReference>
<dbReference type="GO" id="GO:0000105">
    <property type="term" value="P:L-histidine biosynthetic process"/>
    <property type="evidence" value="ECO:0007669"/>
    <property type="project" value="UniProtKB-UniRule"/>
</dbReference>
<dbReference type="CDD" id="cd04731">
    <property type="entry name" value="HisF"/>
    <property type="match status" value="1"/>
</dbReference>
<dbReference type="FunFam" id="3.20.20.70:FF:000006">
    <property type="entry name" value="Imidazole glycerol phosphate synthase subunit HisF"/>
    <property type="match status" value="1"/>
</dbReference>
<dbReference type="Gene3D" id="3.20.20.70">
    <property type="entry name" value="Aldolase class I"/>
    <property type="match status" value="1"/>
</dbReference>
<dbReference type="HAMAP" id="MF_01013">
    <property type="entry name" value="HisF"/>
    <property type="match status" value="1"/>
</dbReference>
<dbReference type="InterPro" id="IPR013785">
    <property type="entry name" value="Aldolase_TIM"/>
</dbReference>
<dbReference type="InterPro" id="IPR006062">
    <property type="entry name" value="His_biosynth"/>
</dbReference>
<dbReference type="InterPro" id="IPR004651">
    <property type="entry name" value="HisF"/>
</dbReference>
<dbReference type="InterPro" id="IPR050064">
    <property type="entry name" value="IGPS_HisA/HisF"/>
</dbReference>
<dbReference type="InterPro" id="IPR011060">
    <property type="entry name" value="RibuloseP-bd_barrel"/>
</dbReference>
<dbReference type="NCBIfam" id="TIGR00735">
    <property type="entry name" value="hisF"/>
    <property type="match status" value="1"/>
</dbReference>
<dbReference type="PANTHER" id="PTHR21235:SF2">
    <property type="entry name" value="IMIDAZOLE GLYCEROL PHOSPHATE SYNTHASE HISHF"/>
    <property type="match status" value="1"/>
</dbReference>
<dbReference type="PANTHER" id="PTHR21235">
    <property type="entry name" value="IMIDAZOLE GLYCEROL PHOSPHATE SYNTHASE SUBUNIT HISF/H IGP SYNTHASE SUBUNIT HISF/H"/>
    <property type="match status" value="1"/>
</dbReference>
<dbReference type="Pfam" id="PF00977">
    <property type="entry name" value="His_biosynth"/>
    <property type="match status" value="1"/>
</dbReference>
<dbReference type="SUPFAM" id="SSF51366">
    <property type="entry name" value="Ribulose-phoshate binding barrel"/>
    <property type="match status" value="1"/>
</dbReference>
<keyword id="KW-0028">Amino-acid biosynthesis</keyword>
<keyword id="KW-0963">Cytoplasm</keyword>
<keyword id="KW-0368">Histidine biosynthesis</keyword>
<keyword id="KW-0456">Lyase</keyword>
<feature type="chain" id="PRO_0000142105" description="Imidazole glycerol phosphate synthase subunit HisF">
    <location>
        <begin position="1"/>
        <end position="252"/>
    </location>
</feature>
<feature type="active site" evidence="1">
    <location>
        <position position="11"/>
    </location>
</feature>
<feature type="active site" evidence="1">
    <location>
        <position position="130"/>
    </location>
</feature>
<proteinExistence type="inferred from homology"/>
<accession>Q6F799</accession>
<reference key="1">
    <citation type="journal article" date="2004" name="Nucleic Acids Res.">
        <title>Unique features revealed by the genome sequence of Acinetobacter sp. ADP1, a versatile and naturally transformation competent bacterium.</title>
        <authorList>
            <person name="Barbe V."/>
            <person name="Vallenet D."/>
            <person name="Fonknechten N."/>
            <person name="Kreimeyer A."/>
            <person name="Oztas S."/>
            <person name="Labarre L."/>
            <person name="Cruveiller S."/>
            <person name="Robert C."/>
            <person name="Duprat S."/>
            <person name="Wincker P."/>
            <person name="Ornston L.N."/>
            <person name="Weissenbach J."/>
            <person name="Marliere P."/>
            <person name="Cohen G.N."/>
            <person name="Medigue C."/>
        </authorList>
    </citation>
    <scope>NUCLEOTIDE SEQUENCE [LARGE SCALE GENOMIC DNA]</scope>
    <source>
        <strain>ATCC 33305 / BD413 / ADP1</strain>
    </source>
</reference>
<name>HIS6_ACIAD</name>
<sequence>MLAKRIIPCLDVDNGRVVKGVQFLDIRDAGDPVEVARRYNEQGADEITFLDITATHHGRDTTYRTVERMAESVFVPLTVGGGVRKVEDIRLLLNAGADKVSINSAAVFNPEFVQEASQRFGAQCIVVAIDAKKTGDNTWEIFTHGGRKPTGIDALEWSVKMAEYGAGELLVTSMDADGTKAGYDIALMREINNRVSIPTIASGGVGNLQHMADGILKGGADAVLAASIFHFGQHTIPEAKQFLAAQGIEMRL</sequence>